<proteinExistence type="evidence at protein level"/>
<reference key="1">
    <citation type="journal article" date="2004" name="Nature">
        <title>The DNA sequence and comparative analysis of human chromosome 10.</title>
        <authorList>
            <person name="Deloukas P."/>
            <person name="Earthrowl M.E."/>
            <person name="Grafham D.V."/>
            <person name="Rubenfield M."/>
            <person name="French L."/>
            <person name="Steward C.A."/>
            <person name="Sims S.K."/>
            <person name="Jones M.C."/>
            <person name="Searle S."/>
            <person name="Scott C."/>
            <person name="Howe K."/>
            <person name="Hunt S.E."/>
            <person name="Andrews T.D."/>
            <person name="Gilbert J.G.R."/>
            <person name="Swarbreck D."/>
            <person name="Ashurst J.L."/>
            <person name="Taylor A."/>
            <person name="Battles J."/>
            <person name="Bird C.P."/>
            <person name="Ainscough R."/>
            <person name="Almeida J.P."/>
            <person name="Ashwell R.I.S."/>
            <person name="Ambrose K.D."/>
            <person name="Babbage A.K."/>
            <person name="Bagguley C.L."/>
            <person name="Bailey J."/>
            <person name="Banerjee R."/>
            <person name="Bates K."/>
            <person name="Beasley H."/>
            <person name="Bray-Allen S."/>
            <person name="Brown A.J."/>
            <person name="Brown J.Y."/>
            <person name="Burford D.C."/>
            <person name="Burrill W."/>
            <person name="Burton J."/>
            <person name="Cahill P."/>
            <person name="Camire D."/>
            <person name="Carter N.P."/>
            <person name="Chapman J.C."/>
            <person name="Clark S.Y."/>
            <person name="Clarke G."/>
            <person name="Clee C.M."/>
            <person name="Clegg S."/>
            <person name="Corby N."/>
            <person name="Coulson A."/>
            <person name="Dhami P."/>
            <person name="Dutta I."/>
            <person name="Dunn M."/>
            <person name="Faulkner L."/>
            <person name="Frankish A."/>
            <person name="Frankland J.A."/>
            <person name="Garner P."/>
            <person name="Garnett J."/>
            <person name="Gribble S."/>
            <person name="Griffiths C."/>
            <person name="Grocock R."/>
            <person name="Gustafson E."/>
            <person name="Hammond S."/>
            <person name="Harley J.L."/>
            <person name="Hart E."/>
            <person name="Heath P.D."/>
            <person name="Ho T.P."/>
            <person name="Hopkins B."/>
            <person name="Horne J."/>
            <person name="Howden P.J."/>
            <person name="Huckle E."/>
            <person name="Hynds C."/>
            <person name="Johnson C."/>
            <person name="Johnson D."/>
            <person name="Kana A."/>
            <person name="Kay M."/>
            <person name="Kimberley A.M."/>
            <person name="Kershaw J.K."/>
            <person name="Kokkinaki M."/>
            <person name="Laird G.K."/>
            <person name="Lawlor S."/>
            <person name="Lee H.M."/>
            <person name="Leongamornlert D.A."/>
            <person name="Laird G."/>
            <person name="Lloyd C."/>
            <person name="Lloyd D.M."/>
            <person name="Loveland J."/>
            <person name="Lovell J."/>
            <person name="McLaren S."/>
            <person name="McLay K.E."/>
            <person name="McMurray A."/>
            <person name="Mashreghi-Mohammadi M."/>
            <person name="Matthews L."/>
            <person name="Milne S."/>
            <person name="Nickerson T."/>
            <person name="Nguyen M."/>
            <person name="Overton-Larty E."/>
            <person name="Palmer S.A."/>
            <person name="Pearce A.V."/>
            <person name="Peck A.I."/>
            <person name="Pelan S."/>
            <person name="Phillimore B."/>
            <person name="Porter K."/>
            <person name="Rice C.M."/>
            <person name="Rogosin A."/>
            <person name="Ross M.T."/>
            <person name="Sarafidou T."/>
            <person name="Sehra H.K."/>
            <person name="Shownkeen R."/>
            <person name="Skuce C.D."/>
            <person name="Smith M."/>
            <person name="Standring L."/>
            <person name="Sycamore N."/>
            <person name="Tester J."/>
            <person name="Thorpe A."/>
            <person name="Torcasso W."/>
            <person name="Tracey A."/>
            <person name="Tromans A."/>
            <person name="Tsolas J."/>
            <person name="Wall M."/>
            <person name="Walsh J."/>
            <person name="Wang H."/>
            <person name="Weinstock K."/>
            <person name="West A.P."/>
            <person name="Willey D.L."/>
            <person name="Whitehead S.L."/>
            <person name="Wilming L."/>
            <person name="Wray P.W."/>
            <person name="Young L."/>
            <person name="Chen Y."/>
            <person name="Lovering R.C."/>
            <person name="Moschonas N.K."/>
            <person name="Siebert R."/>
            <person name="Fechtel K."/>
            <person name="Bentley D."/>
            <person name="Durbin R.M."/>
            <person name="Hubbard T."/>
            <person name="Doucette-Stamm L."/>
            <person name="Beck S."/>
            <person name="Smith D.R."/>
            <person name="Rogers J."/>
        </authorList>
    </citation>
    <scope>NUCLEOTIDE SEQUENCE [LARGE SCALE GENOMIC DNA]</scope>
</reference>
<reference key="2">
    <citation type="journal article" date="2004" name="Genome Res.">
        <title>The status, quality, and expansion of the NIH full-length cDNA project: the Mammalian Gene Collection (MGC).</title>
        <authorList>
            <consortium name="The MGC Project Team"/>
        </authorList>
    </citation>
    <scope>NUCLEOTIDE SEQUENCE [LARGE SCALE MRNA] (ISOFORM 1)</scope>
    <source>
        <tissue>Pancreas</tissue>
    </source>
</reference>
<reference key="3">
    <citation type="submission" date="2006-03" db="EMBL/GenBank/DDBJ databases">
        <authorList>
            <person name="Arakawa T."/>
            <person name="Carninci P."/>
            <person name="Fukuda S."/>
            <person name="Hasegawa A."/>
            <person name="Hayashida K."/>
            <person name="Hori F."/>
            <person name="Kai C."/>
            <person name="Kawai J."/>
            <person name="Kojima M."/>
            <person name="Murata M."/>
            <person name="Nakamura M."/>
            <person name="Nishiyori H."/>
            <person name="Nomura K."/>
            <person name="Ohno M."/>
            <person name="Sasaki D."/>
            <person name="Shibazaki E."/>
            <person name="Tagami M."/>
            <person name="Tagami Y."/>
            <person name="Hayashizaki Y."/>
        </authorList>
    </citation>
    <scope>NUCLEOTIDE SEQUENCE [LARGE SCALE MRNA] OF 1-88 (ISOFORM 2)</scope>
    <source>
        <tissue>Testis</tissue>
    </source>
</reference>
<reference key="4">
    <citation type="journal article" date="2008" name="Mol. Cell">
        <title>Kinase-selective enrichment enables quantitative phosphoproteomics of the kinome across the cell cycle.</title>
        <authorList>
            <person name="Daub H."/>
            <person name="Olsen J.V."/>
            <person name="Bairlein M."/>
            <person name="Gnad F."/>
            <person name="Oppermann F.S."/>
            <person name="Korner R."/>
            <person name="Greff Z."/>
            <person name="Keri G."/>
            <person name="Stemmann O."/>
            <person name="Mann M."/>
        </authorList>
    </citation>
    <scope>PHOSPHORYLATION [LARGE SCALE ANALYSIS] AT SER-62</scope>
    <scope>IDENTIFICATION BY MASS SPECTROMETRY [LARGE SCALE ANALYSIS]</scope>
    <source>
        <tissue>Cervix carcinoma</tissue>
    </source>
</reference>
<reference key="5">
    <citation type="journal article" date="2013" name="J. Proteome Res.">
        <title>Toward a comprehensive characterization of a human cancer cell phosphoproteome.</title>
        <authorList>
            <person name="Zhou H."/>
            <person name="Di Palma S."/>
            <person name="Preisinger C."/>
            <person name="Peng M."/>
            <person name="Polat A.N."/>
            <person name="Heck A.J."/>
            <person name="Mohammed S."/>
        </authorList>
    </citation>
    <scope>PHOSPHORYLATION [LARGE SCALE ANALYSIS] AT SER-33</scope>
    <scope>IDENTIFICATION BY MASS SPECTROMETRY [LARGE SCALE ANALYSIS]</scope>
    <source>
        <tissue>Erythroleukemia</tissue>
    </source>
</reference>
<reference key="6">
    <citation type="journal article" date="2019" name="Sci. Rep.">
        <title>CRISPR knockout screen implicates three genes in lysosome function.</title>
        <authorList>
            <person name="Lenk G.M."/>
            <person name="Park Y.N."/>
            <person name="Lemons R."/>
            <person name="Flynn E."/>
            <person name="Plank M."/>
            <person name="Frei C.M."/>
            <person name="Davis M.J."/>
            <person name="Gregorka B."/>
            <person name="Swanson J.A."/>
            <person name="Meisler M.H."/>
            <person name="Kitzman J.O."/>
        </authorList>
    </citation>
    <scope>FUNCTION</scope>
</reference>
<keyword id="KW-0025">Alternative splicing</keyword>
<keyword id="KW-0472">Membrane</keyword>
<keyword id="KW-0597">Phosphoprotein</keyword>
<keyword id="KW-1267">Proteomics identification</keyword>
<keyword id="KW-1185">Reference proteome</keyword>
<keyword id="KW-0812">Transmembrane</keyword>
<keyword id="KW-1133">Transmembrane helix</keyword>
<evidence type="ECO:0000250" key="1">
    <source>
        <dbReference type="UniProtKB" id="Q8N8J7"/>
    </source>
</evidence>
<evidence type="ECO:0000255" key="2"/>
<evidence type="ECO:0000256" key="3">
    <source>
        <dbReference type="SAM" id="MobiDB-lite"/>
    </source>
</evidence>
<evidence type="ECO:0000269" key="4">
    <source>
    </source>
</evidence>
<evidence type="ECO:0000303" key="5">
    <source ref="3"/>
</evidence>
<evidence type="ECO:0000305" key="6"/>
<evidence type="ECO:0000312" key="7">
    <source>
        <dbReference type="HGNC" id="HGNC:23519"/>
    </source>
</evidence>
<evidence type="ECO:0007744" key="8">
    <source>
    </source>
</evidence>
<evidence type="ECO:0007744" key="9">
    <source>
    </source>
</evidence>
<dbReference type="EMBL" id="AL450311">
    <property type="status" value="NOT_ANNOTATED_CDS"/>
    <property type="molecule type" value="Genomic_DNA"/>
</dbReference>
<dbReference type="EMBL" id="BC013587">
    <property type="protein sequence ID" value="AAH13587.1"/>
    <property type="molecule type" value="mRNA"/>
</dbReference>
<dbReference type="EMBL" id="DB456046">
    <property type="status" value="NOT_ANNOTATED_CDS"/>
    <property type="molecule type" value="mRNA"/>
</dbReference>
<dbReference type="CCDS" id="CCDS7295.1">
    <molecule id="Q96D05-1"/>
</dbReference>
<dbReference type="RefSeq" id="NP_660349.1">
    <molecule id="Q96D05-1"/>
    <property type="nucleotide sequence ID" value="NM_145306.3"/>
</dbReference>
<dbReference type="RefSeq" id="XP_005269663.1">
    <molecule id="Q96D05-2"/>
    <property type="nucleotide sequence ID" value="XM_005269606.3"/>
</dbReference>
<dbReference type="RefSeq" id="XP_005269665.1">
    <molecule id="Q96D05-1"/>
    <property type="nucleotide sequence ID" value="XM_005269608.4"/>
</dbReference>
<dbReference type="RefSeq" id="XP_011537757.1">
    <molecule id="Q96D05-1"/>
    <property type="nucleotide sequence ID" value="XM_011539455.3"/>
</dbReference>
<dbReference type="RefSeq" id="XP_016871325.1">
    <property type="nucleotide sequence ID" value="XM_017015836.1"/>
</dbReference>
<dbReference type="RefSeq" id="XP_054220983.1">
    <molecule id="Q96D05-2"/>
    <property type="nucleotide sequence ID" value="XM_054365008.1"/>
</dbReference>
<dbReference type="RefSeq" id="XP_054220984.1">
    <molecule id="Q96D05-1"/>
    <property type="nucleotide sequence ID" value="XM_054365009.1"/>
</dbReference>
<dbReference type="RefSeq" id="XP_054220985.1">
    <molecule id="Q96D05-1"/>
    <property type="nucleotide sequence ID" value="XM_054365010.1"/>
</dbReference>
<dbReference type="BioGRID" id="128570">
    <property type="interactions" value="113"/>
</dbReference>
<dbReference type="FunCoup" id="Q96D05">
    <property type="interactions" value="585"/>
</dbReference>
<dbReference type="IntAct" id="Q96D05">
    <property type="interactions" value="89"/>
</dbReference>
<dbReference type="MINT" id="Q96D05"/>
<dbReference type="STRING" id="9606.ENSP00000362376"/>
<dbReference type="GlyGen" id="Q96D05">
    <property type="glycosylation" value="1 site, 1 O-linked glycan (1 site)"/>
</dbReference>
<dbReference type="iPTMnet" id="Q96D05"/>
<dbReference type="PhosphoSitePlus" id="Q96D05"/>
<dbReference type="BioMuta" id="FAM241B"/>
<dbReference type="DMDM" id="68565253"/>
<dbReference type="jPOST" id="Q96D05"/>
<dbReference type="MassIVE" id="Q96D05"/>
<dbReference type="PaxDb" id="9606-ENSP00000362376"/>
<dbReference type="PeptideAtlas" id="Q96D05"/>
<dbReference type="ProteomicsDB" id="76242">
    <molecule id="Q96D05-1"/>
</dbReference>
<dbReference type="ProteomicsDB" id="76243">
    <molecule id="Q96D05-2"/>
</dbReference>
<dbReference type="Pumba" id="Q96D05"/>
<dbReference type="TopDownProteomics" id="Q96D05-1">
    <molecule id="Q96D05-1"/>
</dbReference>
<dbReference type="TopDownProteomics" id="Q96D05-2">
    <molecule id="Q96D05-2"/>
</dbReference>
<dbReference type="Antibodypedia" id="48669">
    <property type="antibodies" value="10 antibodies from 8 providers"/>
</dbReference>
<dbReference type="DNASU" id="219738"/>
<dbReference type="Ensembl" id="ENST00000373279.6">
    <molecule id="Q96D05-1"/>
    <property type="protein sequence ID" value="ENSP00000362376.4"/>
    <property type="gene ID" value="ENSG00000171224.9"/>
</dbReference>
<dbReference type="GeneID" id="219738"/>
<dbReference type="KEGG" id="hsa:219738"/>
<dbReference type="MANE-Select" id="ENST00000373279.6">
    <property type="protein sequence ID" value="ENSP00000362376.4"/>
    <property type="RefSeq nucleotide sequence ID" value="NM_145306.3"/>
    <property type="RefSeq protein sequence ID" value="NP_660349.1"/>
</dbReference>
<dbReference type="UCSC" id="uc001jpq.5">
    <molecule id="Q96D05-1"/>
    <property type="organism name" value="human"/>
</dbReference>
<dbReference type="AGR" id="HGNC:23519"/>
<dbReference type="CTD" id="219738"/>
<dbReference type="DisGeNET" id="219738"/>
<dbReference type="GeneCards" id="FAM241B"/>
<dbReference type="HGNC" id="HGNC:23519">
    <property type="gene designation" value="FAM241B"/>
</dbReference>
<dbReference type="HPA" id="ENSG00000171224">
    <property type="expression patterns" value="Tissue enhanced (brain)"/>
</dbReference>
<dbReference type="neXtProt" id="NX_Q96D05"/>
<dbReference type="OpenTargets" id="ENSG00000171224"/>
<dbReference type="PharmGKB" id="PA134863788"/>
<dbReference type="VEuPathDB" id="HostDB:ENSG00000171224"/>
<dbReference type="eggNOG" id="ENOG502S2ZQ">
    <property type="taxonomic scope" value="Eukaryota"/>
</dbReference>
<dbReference type="GeneTree" id="ENSGT00940000154340"/>
<dbReference type="HOGENOM" id="CLU_138765_1_0_1"/>
<dbReference type="InParanoid" id="Q96D05"/>
<dbReference type="OMA" id="LIYIVSH"/>
<dbReference type="OrthoDB" id="10060343at2759"/>
<dbReference type="PAN-GO" id="Q96D05">
    <property type="GO annotations" value="1 GO annotation based on evolutionary models"/>
</dbReference>
<dbReference type="PhylomeDB" id="Q96D05"/>
<dbReference type="TreeFam" id="TF335755"/>
<dbReference type="PathwayCommons" id="Q96D05"/>
<dbReference type="SignaLink" id="Q96D05"/>
<dbReference type="BioGRID-ORCS" id="219738">
    <property type="hits" value="10 hits in 1141 CRISPR screens"/>
</dbReference>
<dbReference type="CD-CODE" id="FB4E32DD">
    <property type="entry name" value="Presynaptic clusters and postsynaptic densities"/>
</dbReference>
<dbReference type="ChiTaRS" id="C10orf35">
    <property type="organism name" value="human"/>
</dbReference>
<dbReference type="GenomeRNAi" id="219738"/>
<dbReference type="Pharos" id="Q96D05">
    <property type="development level" value="Tdark"/>
</dbReference>
<dbReference type="PRO" id="PR:Q96D05"/>
<dbReference type="Proteomes" id="UP000005640">
    <property type="component" value="Chromosome 10"/>
</dbReference>
<dbReference type="RNAct" id="Q96D05">
    <property type="molecule type" value="protein"/>
</dbReference>
<dbReference type="Bgee" id="ENSG00000171224">
    <property type="expression patterns" value="Expressed in cerebellar hemisphere and 141 other cell types or tissues"/>
</dbReference>
<dbReference type="ExpressionAtlas" id="Q96D05">
    <property type="expression patterns" value="baseline and differential"/>
</dbReference>
<dbReference type="GO" id="GO:0043231">
    <property type="term" value="C:intracellular membrane-bounded organelle"/>
    <property type="evidence" value="ECO:0000318"/>
    <property type="project" value="GO_Central"/>
</dbReference>
<dbReference type="GO" id="GO:0016020">
    <property type="term" value="C:membrane"/>
    <property type="evidence" value="ECO:0007669"/>
    <property type="project" value="UniProtKB-SubCell"/>
</dbReference>
<dbReference type="InterPro" id="IPR027953">
    <property type="entry name" value="DUF4605"/>
</dbReference>
<dbReference type="InterPro" id="IPR052502">
    <property type="entry name" value="FAM241_domain"/>
</dbReference>
<dbReference type="PANTHER" id="PTHR33690">
    <property type="entry name" value="DUF4605 DOMAIN-CONTAINING PROTEIN"/>
    <property type="match status" value="1"/>
</dbReference>
<dbReference type="PANTHER" id="PTHR33690:SF2">
    <property type="entry name" value="PROTEIN FAM241B"/>
    <property type="match status" value="1"/>
</dbReference>
<dbReference type="Pfam" id="PF15378">
    <property type="entry name" value="DUF4605"/>
    <property type="match status" value="1"/>
</dbReference>
<gene>
    <name evidence="7" type="primary">FAM241B</name>
    <name type="synonym">C10orf35</name>
</gene>
<sequence length="121" mass="13238">MVRILANGEIVQDDDPRVRTTTQPPRGSIPRQSFFNRGHGAPPGGPGPRQQQAGARLGAAQSPFNDLNRQLVNMGFPQWHLGNHAVEPVTSILLLFLLMMLGVRGLLLVGLVYLVSHLSQR</sequence>
<accession>Q96D05</accession>
<organism>
    <name type="scientific">Homo sapiens</name>
    <name type="common">Human</name>
    <dbReference type="NCBI Taxonomy" id="9606"/>
    <lineage>
        <taxon>Eukaryota</taxon>
        <taxon>Metazoa</taxon>
        <taxon>Chordata</taxon>
        <taxon>Craniata</taxon>
        <taxon>Vertebrata</taxon>
        <taxon>Euteleostomi</taxon>
        <taxon>Mammalia</taxon>
        <taxon>Eutheria</taxon>
        <taxon>Euarchontoglires</taxon>
        <taxon>Primates</taxon>
        <taxon>Haplorrhini</taxon>
        <taxon>Catarrhini</taxon>
        <taxon>Hominidae</taxon>
        <taxon>Homo</taxon>
    </lineage>
</organism>
<feature type="chain" id="PRO_0000089790" description="Protein FAM241B">
    <location>
        <begin position="1"/>
        <end position="121"/>
    </location>
</feature>
<feature type="transmembrane region" description="Helical" evidence="2">
    <location>
        <begin position="92"/>
        <end position="112"/>
    </location>
</feature>
<feature type="region of interest" description="Disordered" evidence="3">
    <location>
        <begin position="12"/>
        <end position="58"/>
    </location>
</feature>
<feature type="compositionally biased region" description="Polar residues" evidence="3">
    <location>
        <begin position="19"/>
        <end position="35"/>
    </location>
</feature>
<feature type="compositionally biased region" description="Low complexity" evidence="3">
    <location>
        <begin position="48"/>
        <end position="58"/>
    </location>
</feature>
<feature type="modified residue" description="Phosphoserine" evidence="9">
    <location>
        <position position="33"/>
    </location>
</feature>
<feature type="modified residue" description="Phosphoserine" evidence="8">
    <location>
        <position position="62"/>
    </location>
</feature>
<feature type="splice variant" id="VSP_042153" description="In isoform 2." evidence="5">
    <original>M</original>
    <variation>MSPVLSGIHSIYSAWVTSVNITDCKPPSISGAAHQGPTAPGRM</variation>
    <location>
        <position position="1"/>
    </location>
</feature>
<protein>
    <recommendedName>
        <fullName evidence="6">Protein FAM241B</fullName>
    </recommendedName>
</protein>
<comment type="function">
    <text evidence="4">May play a role in lysosome homeostasis.</text>
</comment>
<comment type="interaction">
    <interactant intactId="EBI-2548784">
        <id>Q96D05</id>
    </interactant>
    <interactant intactId="EBI-7131783">
        <id>Q8N205</id>
        <label>SYNE4</label>
    </interactant>
    <organismsDiffer>false</organismsDiffer>
    <experiments>3</experiments>
</comment>
<comment type="interaction">
    <interactant intactId="EBI-12118888">
        <id>Q96D05-2</id>
    </interactant>
    <interactant intactId="EBI-700794">
        <id>Q13323</id>
        <label>BIK</label>
    </interactant>
    <organismsDiffer>false</organismsDiffer>
    <experiments>3</experiments>
</comment>
<comment type="interaction">
    <interactant intactId="EBI-12118888">
        <id>Q96D05-2</id>
    </interactant>
    <interactant intactId="EBI-3895726">
        <id>P62952</id>
        <label>BLCAP</label>
    </interactant>
    <organismsDiffer>false</organismsDiffer>
    <experiments>3</experiments>
</comment>
<comment type="interaction">
    <interactant intactId="EBI-12118888">
        <id>Q96D05-2</id>
    </interactant>
    <interactant intactId="EBI-749464">
        <id>Q12983</id>
        <label>BNIP3</label>
    </interactant>
    <organismsDiffer>false</organismsDiffer>
    <experiments>3</experiments>
</comment>
<comment type="interaction">
    <interactant intactId="EBI-12118888">
        <id>Q96D05-2</id>
    </interactant>
    <interactant intactId="EBI-7797864">
        <id>P11912</id>
        <label>CD79A</label>
    </interactant>
    <organismsDiffer>false</organismsDiffer>
    <experiments>3</experiments>
</comment>
<comment type="interaction">
    <interactant intactId="EBI-12118888">
        <id>Q96D05-2</id>
    </interactant>
    <interactant intactId="EBI-2130213">
        <id>Q99675</id>
        <label>CGRRF1</label>
    </interactant>
    <organismsDiffer>false</organismsDiffer>
    <experiments>3</experiments>
</comment>
<comment type="interaction">
    <interactant intactId="EBI-12118888">
        <id>Q96D05-2</id>
    </interactant>
    <interactant intactId="EBI-1045797">
        <id>Q8N5K1</id>
        <label>CISD2</label>
    </interactant>
    <organismsDiffer>false</organismsDiffer>
    <experiments>3</experiments>
</comment>
<comment type="interaction">
    <interactant intactId="EBI-12118888">
        <id>Q96D05-2</id>
    </interactant>
    <interactant intactId="EBI-1052304">
        <id>Q8NBQ5</id>
        <label>HSD17B11</label>
    </interactant>
    <organismsDiffer>false</organismsDiffer>
    <experiments>3</experiments>
</comment>
<comment type="interaction">
    <interactant intactId="EBI-12118888">
        <id>Q96D05-2</id>
    </interactant>
    <interactant intactId="EBI-749265">
        <id>Q8N6L0</id>
        <label>KASH5</label>
    </interactant>
    <organismsDiffer>false</organismsDiffer>
    <experiments>3</experiments>
</comment>
<comment type="interaction">
    <interactant intactId="EBI-12118888">
        <id>Q96D05-2</id>
    </interactant>
    <interactant intactId="EBI-12245642">
        <id>Q9UJG1</id>
        <label>MOSPD1</label>
    </interactant>
    <organismsDiffer>false</organismsDiffer>
    <experiments>3</experiments>
</comment>
<comment type="interaction">
    <interactant intactId="EBI-12118888">
        <id>Q96D05-2</id>
    </interactant>
    <interactant intactId="EBI-7545592">
        <id>Q9H6H4</id>
        <label>REEP4</label>
    </interactant>
    <organismsDiffer>false</organismsDiffer>
    <experiments>3</experiments>
</comment>
<comment type="interaction">
    <interactant intactId="EBI-12118888">
        <id>Q96D05-2</id>
    </interactant>
    <interactant intactId="EBI-2340249">
        <id>Q96GF1</id>
        <label>RNF185</label>
    </interactant>
    <organismsDiffer>false</organismsDiffer>
    <experiments>3</experiments>
</comment>
<comment type="interaction">
    <interactant intactId="EBI-12118888">
        <id>Q96D05-2</id>
    </interactant>
    <interactant intactId="EBI-348482">
        <id>Q99942</id>
        <label>RNF5</label>
    </interactant>
    <organismsDiffer>false</organismsDiffer>
    <experiments>3</experiments>
</comment>
<comment type="interaction">
    <interactant intactId="EBI-12118888">
        <id>Q96D05-2</id>
    </interactant>
    <interactant intactId="EBI-17247926">
        <id>Q9NY72</id>
        <label>SCN3B</label>
    </interactant>
    <organismsDiffer>false</organismsDiffer>
    <experiments>3</experiments>
</comment>
<comment type="interaction">
    <interactant intactId="EBI-12118888">
        <id>Q96D05-2</id>
    </interactant>
    <interactant intactId="EBI-3923031">
        <id>Q14973</id>
        <label>SLC10A1</label>
    </interactant>
    <organismsDiffer>false</organismsDiffer>
    <experiments>3</experiments>
</comment>
<comment type="interaction">
    <interactant intactId="EBI-12118888">
        <id>Q96D05-2</id>
    </interactant>
    <interactant intactId="EBI-4289564">
        <id>P30825</id>
        <label>SLC7A1</label>
    </interactant>
    <organismsDiffer>false</organismsDiffer>
    <experiments>3</experiments>
</comment>
<comment type="interaction">
    <interactant intactId="EBI-12118888">
        <id>Q96D05-2</id>
    </interactant>
    <interactant intactId="EBI-2866213">
        <id>Q92537</id>
        <label>SUSD6</label>
    </interactant>
    <organismsDiffer>false</organismsDiffer>
    <experiments>3</experiments>
</comment>
<comment type="interaction">
    <interactant intactId="EBI-12118888">
        <id>Q96D05-2</id>
    </interactant>
    <interactant intactId="EBI-8642211">
        <id>Q8WY98</id>
        <label>TMEM234</label>
    </interactant>
    <organismsDiffer>false</organismsDiffer>
    <experiments>3</experiments>
</comment>
<comment type="interaction">
    <interactant intactId="EBI-12118888">
        <id>Q96D05-2</id>
    </interactant>
    <interactant intactId="EBI-6447886">
        <id>Q9Y320</id>
        <label>TMX2</label>
    </interactant>
    <organismsDiffer>false</organismsDiffer>
    <experiments>3</experiments>
</comment>
<comment type="interaction">
    <interactant intactId="EBI-12118888">
        <id>Q96D05-2</id>
    </interactant>
    <interactant intactId="EBI-18055230">
        <id>P34981</id>
        <label>TRHR</label>
    </interactant>
    <organismsDiffer>false</organismsDiffer>
    <experiments>3</experiments>
</comment>
<comment type="interaction">
    <interactant intactId="EBI-12118888">
        <id>Q96D05-2</id>
    </interactant>
    <interactant intactId="EBI-12837904">
        <id>Q96MV8</id>
        <label>ZDHHC15</label>
    </interactant>
    <organismsDiffer>false</organismsDiffer>
    <experiments>3</experiments>
</comment>
<comment type="subcellular location">
    <subcellularLocation>
        <location evidence="1">Membrane</location>
        <topology evidence="2">Single-pass membrane protein</topology>
    </subcellularLocation>
</comment>
<comment type="alternative products">
    <event type="alternative splicing"/>
    <isoform>
        <id>Q96D05-1</id>
        <name>1</name>
        <sequence type="displayed"/>
    </isoform>
    <isoform>
        <id>Q96D05-2</id>
        <name>2</name>
        <sequence type="described" ref="VSP_042153"/>
    </isoform>
</comment>
<comment type="similarity">
    <text evidence="6">Belongs to the FAM241 family.</text>
</comment>
<name>F241B_HUMAN</name>